<reference key="1">
    <citation type="journal article" date="2008" name="Environ. Microbiol.">
        <title>The genome of Erwinia tasmaniensis strain Et1/99, a non-pathogenic bacterium in the genus Erwinia.</title>
        <authorList>
            <person name="Kube M."/>
            <person name="Migdoll A.M."/>
            <person name="Mueller I."/>
            <person name="Kuhl H."/>
            <person name="Beck A."/>
            <person name="Reinhardt R."/>
            <person name="Geider K."/>
        </authorList>
    </citation>
    <scope>NUCLEOTIDE SEQUENCE [LARGE SCALE GENOMIC DNA]</scope>
    <source>
        <strain>DSM 17950 / CFBP 7177 / CIP 109463 / NCPPB 4357 / Et1/99</strain>
    </source>
</reference>
<name>RL10_ERWT9</name>
<sequence>MALNLQDKQAIVAEVSEVAKGALSAVVADSRGVTVDKMTELRKAGREAGVYMRVVRNTLLRRVVEGTQFECLKDTLTGPTLIAYSMEHPGAAARLFKEFAKANAKFEVKAAAFEGELISAAQIDRLATLPTYDEAIARLMATMKEAAAGKLVRTLAAVRDQKEATAA</sequence>
<organism>
    <name type="scientific">Erwinia tasmaniensis (strain DSM 17950 / CFBP 7177 / CIP 109463 / NCPPB 4357 / Et1/99)</name>
    <dbReference type="NCBI Taxonomy" id="465817"/>
    <lineage>
        <taxon>Bacteria</taxon>
        <taxon>Pseudomonadati</taxon>
        <taxon>Pseudomonadota</taxon>
        <taxon>Gammaproteobacteria</taxon>
        <taxon>Enterobacterales</taxon>
        <taxon>Erwiniaceae</taxon>
        <taxon>Erwinia</taxon>
    </lineage>
</organism>
<evidence type="ECO:0000255" key="1">
    <source>
        <dbReference type="HAMAP-Rule" id="MF_00362"/>
    </source>
</evidence>
<evidence type="ECO:0000305" key="2"/>
<dbReference type="EMBL" id="CU468135">
    <property type="protein sequence ID" value="CAO95199.1"/>
    <property type="molecule type" value="Genomic_DNA"/>
</dbReference>
<dbReference type="RefSeq" id="WP_012439923.1">
    <property type="nucleotide sequence ID" value="NC_010694.1"/>
</dbReference>
<dbReference type="STRING" id="465817.ETA_01530"/>
<dbReference type="GeneID" id="92238571"/>
<dbReference type="KEGG" id="eta:ETA_01530"/>
<dbReference type="eggNOG" id="COG0244">
    <property type="taxonomic scope" value="Bacteria"/>
</dbReference>
<dbReference type="HOGENOM" id="CLU_092227_0_2_6"/>
<dbReference type="OrthoDB" id="9808307at2"/>
<dbReference type="Proteomes" id="UP000001726">
    <property type="component" value="Chromosome"/>
</dbReference>
<dbReference type="GO" id="GO:0015934">
    <property type="term" value="C:large ribosomal subunit"/>
    <property type="evidence" value="ECO:0007669"/>
    <property type="project" value="InterPro"/>
</dbReference>
<dbReference type="GO" id="GO:0070180">
    <property type="term" value="F:large ribosomal subunit rRNA binding"/>
    <property type="evidence" value="ECO:0007669"/>
    <property type="project" value="UniProtKB-UniRule"/>
</dbReference>
<dbReference type="GO" id="GO:0003735">
    <property type="term" value="F:structural constituent of ribosome"/>
    <property type="evidence" value="ECO:0007669"/>
    <property type="project" value="InterPro"/>
</dbReference>
<dbReference type="GO" id="GO:0006412">
    <property type="term" value="P:translation"/>
    <property type="evidence" value="ECO:0007669"/>
    <property type="project" value="UniProtKB-UniRule"/>
</dbReference>
<dbReference type="CDD" id="cd05797">
    <property type="entry name" value="Ribosomal_L10"/>
    <property type="match status" value="1"/>
</dbReference>
<dbReference type="FunFam" id="3.30.70.1730:FF:000001">
    <property type="entry name" value="50S ribosomal protein L10"/>
    <property type="match status" value="1"/>
</dbReference>
<dbReference type="Gene3D" id="3.30.70.1730">
    <property type="match status" value="1"/>
</dbReference>
<dbReference type="Gene3D" id="6.10.250.2350">
    <property type="match status" value="1"/>
</dbReference>
<dbReference type="HAMAP" id="MF_00362">
    <property type="entry name" value="Ribosomal_uL10"/>
    <property type="match status" value="1"/>
</dbReference>
<dbReference type="InterPro" id="IPR001790">
    <property type="entry name" value="Ribosomal_uL10"/>
</dbReference>
<dbReference type="InterPro" id="IPR043141">
    <property type="entry name" value="Ribosomal_uL10-like_sf"/>
</dbReference>
<dbReference type="InterPro" id="IPR022973">
    <property type="entry name" value="Ribosomal_uL10_bac"/>
</dbReference>
<dbReference type="InterPro" id="IPR047865">
    <property type="entry name" value="Ribosomal_uL10_bac_type"/>
</dbReference>
<dbReference type="InterPro" id="IPR002363">
    <property type="entry name" value="Ribosomal_uL10_CS_bac"/>
</dbReference>
<dbReference type="NCBIfam" id="NF000955">
    <property type="entry name" value="PRK00099.1-1"/>
    <property type="match status" value="1"/>
</dbReference>
<dbReference type="PANTHER" id="PTHR11560">
    <property type="entry name" value="39S RIBOSOMAL PROTEIN L10, MITOCHONDRIAL"/>
    <property type="match status" value="1"/>
</dbReference>
<dbReference type="Pfam" id="PF00466">
    <property type="entry name" value="Ribosomal_L10"/>
    <property type="match status" value="1"/>
</dbReference>
<dbReference type="SUPFAM" id="SSF160369">
    <property type="entry name" value="Ribosomal protein L10-like"/>
    <property type="match status" value="1"/>
</dbReference>
<dbReference type="PROSITE" id="PS01109">
    <property type="entry name" value="RIBOSOMAL_L10"/>
    <property type="match status" value="1"/>
</dbReference>
<proteinExistence type="inferred from homology"/>
<protein>
    <recommendedName>
        <fullName evidence="1">Large ribosomal subunit protein uL10</fullName>
    </recommendedName>
    <alternativeName>
        <fullName evidence="2">50S ribosomal protein L10</fullName>
    </alternativeName>
</protein>
<keyword id="KW-1185">Reference proteome</keyword>
<keyword id="KW-0687">Ribonucleoprotein</keyword>
<keyword id="KW-0689">Ribosomal protein</keyword>
<keyword id="KW-0694">RNA-binding</keyword>
<keyword id="KW-0699">rRNA-binding</keyword>
<comment type="function">
    <text evidence="1">Forms part of the ribosomal stalk, playing a central role in the interaction of the ribosome with GTP-bound translation factors.</text>
</comment>
<comment type="subunit">
    <text evidence="1">Part of the ribosomal stalk of the 50S ribosomal subunit. The N-terminus interacts with L11 and the large rRNA to form the base of the stalk. The C-terminus forms an elongated spine to which L12 dimers bind in a sequential fashion forming a multimeric L10(L12)X complex.</text>
</comment>
<comment type="similarity">
    <text evidence="1">Belongs to the universal ribosomal protein uL10 family.</text>
</comment>
<gene>
    <name evidence="1" type="primary">rplJ</name>
    <name type="ordered locus">ETA_01530</name>
</gene>
<feature type="chain" id="PRO_1000120961" description="Large ribosomal subunit protein uL10">
    <location>
        <begin position="1"/>
        <end position="167"/>
    </location>
</feature>
<accession>B2VG94</accession>